<sequence length="144" mass="15075">MASTRVLASRLASQMATKVARPAVRVPARAFTAGTKATPLQAVKRQQMSSIITATRQITQKRAYSSEIAQAMVEVSKNLGMGTAAIGLTGAGIGIGLVFAALLNGVARNPALRGQLFSYAILGFAFVEAIGLFDLMVALMAKFT</sequence>
<organism>
    <name type="scientific">Podospora anserina</name>
    <name type="common">Pleurage anserina</name>
    <dbReference type="NCBI Taxonomy" id="2587412"/>
    <lineage>
        <taxon>Eukaryota</taxon>
        <taxon>Fungi</taxon>
        <taxon>Dikarya</taxon>
        <taxon>Ascomycota</taxon>
        <taxon>Pezizomycotina</taxon>
        <taxon>Sordariomycetes</taxon>
        <taxon>Sordariomycetidae</taxon>
        <taxon>Sordariales</taxon>
        <taxon>Podosporaceae</taxon>
        <taxon>Podospora</taxon>
    </lineage>
</organism>
<dbReference type="EMBL" id="X59801">
    <property type="protein sequence ID" value="CAA42471.1"/>
    <property type="molecule type" value="Genomic_DNA"/>
</dbReference>
<dbReference type="PIR" id="S17915">
    <property type="entry name" value="S17915"/>
</dbReference>
<dbReference type="SMR" id="Q03672"/>
<dbReference type="VEuPathDB" id="FungiDB:PODANS_5_9140"/>
<dbReference type="GO" id="GO:0031966">
    <property type="term" value="C:mitochondrial membrane"/>
    <property type="evidence" value="ECO:0007669"/>
    <property type="project" value="UniProtKB-SubCell"/>
</dbReference>
<dbReference type="GO" id="GO:0045259">
    <property type="term" value="C:proton-transporting ATP synthase complex"/>
    <property type="evidence" value="ECO:0007669"/>
    <property type="project" value="UniProtKB-KW"/>
</dbReference>
<dbReference type="GO" id="GO:0033177">
    <property type="term" value="C:proton-transporting two-sector ATPase complex, proton-transporting domain"/>
    <property type="evidence" value="ECO:0007669"/>
    <property type="project" value="InterPro"/>
</dbReference>
<dbReference type="GO" id="GO:0008289">
    <property type="term" value="F:lipid binding"/>
    <property type="evidence" value="ECO:0007669"/>
    <property type="project" value="UniProtKB-KW"/>
</dbReference>
<dbReference type="GO" id="GO:0015078">
    <property type="term" value="F:proton transmembrane transporter activity"/>
    <property type="evidence" value="ECO:0007669"/>
    <property type="project" value="InterPro"/>
</dbReference>
<dbReference type="GO" id="GO:0015986">
    <property type="term" value="P:proton motive force-driven ATP synthesis"/>
    <property type="evidence" value="ECO:0007669"/>
    <property type="project" value="InterPro"/>
</dbReference>
<dbReference type="CDD" id="cd18182">
    <property type="entry name" value="ATP-synt_Fo_c_ATP5G3"/>
    <property type="match status" value="1"/>
</dbReference>
<dbReference type="FunFam" id="1.20.20.10:FF:000006">
    <property type="entry name" value="ATP synthase subunit 9, mitochondrial"/>
    <property type="match status" value="1"/>
</dbReference>
<dbReference type="Gene3D" id="1.20.20.10">
    <property type="entry name" value="F1F0 ATP synthase subunit C"/>
    <property type="match status" value="1"/>
</dbReference>
<dbReference type="HAMAP" id="MF_01396">
    <property type="entry name" value="ATP_synth_c_bact"/>
    <property type="match status" value="1"/>
</dbReference>
<dbReference type="InterPro" id="IPR000454">
    <property type="entry name" value="ATP_synth_F0_csu"/>
</dbReference>
<dbReference type="InterPro" id="IPR020537">
    <property type="entry name" value="ATP_synth_F0_csu_DDCD_BS"/>
</dbReference>
<dbReference type="InterPro" id="IPR038662">
    <property type="entry name" value="ATP_synth_F0_csu_sf"/>
</dbReference>
<dbReference type="InterPro" id="IPR002379">
    <property type="entry name" value="ATPase_proteolipid_c-like_dom"/>
</dbReference>
<dbReference type="InterPro" id="IPR035921">
    <property type="entry name" value="F/V-ATP_Csub_sf"/>
</dbReference>
<dbReference type="PANTHER" id="PTHR10031">
    <property type="entry name" value="ATP SYNTHASE LIPID-BINDING PROTEIN, MITOCHONDRIAL"/>
    <property type="match status" value="1"/>
</dbReference>
<dbReference type="PANTHER" id="PTHR10031:SF13">
    <property type="entry name" value="ATP SYNTHASE SUBUNIT 9, MITOCHONDRIAL"/>
    <property type="match status" value="1"/>
</dbReference>
<dbReference type="Pfam" id="PF00137">
    <property type="entry name" value="ATP-synt_C"/>
    <property type="match status" value="1"/>
</dbReference>
<dbReference type="PRINTS" id="PR00124">
    <property type="entry name" value="ATPASEC"/>
</dbReference>
<dbReference type="SUPFAM" id="SSF81333">
    <property type="entry name" value="F1F0 ATP synthase subunit C"/>
    <property type="match status" value="1"/>
</dbReference>
<dbReference type="PROSITE" id="PS00605">
    <property type="entry name" value="ATPASE_C"/>
    <property type="match status" value="1"/>
</dbReference>
<proteinExistence type="inferred from homology"/>
<keyword id="KW-0138">CF(0)</keyword>
<keyword id="KW-0375">Hydrogen ion transport</keyword>
<keyword id="KW-0406">Ion transport</keyword>
<keyword id="KW-0446">Lipid-binding</keyword>
<keyword id="KW-0472">Membrane</keyword>
<keyword id="KW-0496">Mitochondrion</keyword>
<keyword id="KW-0809">Transit peptide</keyword>
<keyword id="KW-0812">Transmembrane</keyword>
<keyword id="KW-1133">Transmembrane helix</keyword>
<keyword id="KW-0813">Transport</keyword>
<comment type="function">
    <text>Mitochondrial membrane ATP synthase (F(1)F(0) ATP synthase or Complex V) produces ATP from ADP in the presence of a proton gradient across the membrane which is generated by electron transport complexes of the respiratory chain. F-type ATPases consist of two structural domains, F(1) - containing the extramembraneous catalytic core and F(0) - containing the membrane proton channel, linked together by a central stalk and a peripheral stalk. During catalysis, ATP synthesis in the catalytic domain of F(1) is coupled via a rotary mechanism of the central stalk subunits to proton translocation. Part of the complex F(0) domain. A homomeric c-ring of probably 10 subunits is part of the complex rotary element.</text>
</comment>
<comment type="subunit">
    <text>F-type ATPases have 2 components, CF(1) - the catalytic core - and CF(0) - the membrane proton channel. CF(1) has five subunits: alpha(3), beta(3), gamma(1), delta(1), epsilon(1). CF(0) has three main subunits: a, b and c.</text>
</comment>
<comment type="subcellular location">
    <subcellularLocation>
        <location evidence="3">Mitochondrion membrane</location>
        <topology evidence="3">Multi-pass membrane protein</topology>
    </subcellularLocation>
</comment>
<comment type="similarity">
    <text evidence="3">Belongs to the ATPase C chain family.</text>
</comment>
<accession>Q03672</accession>
<feature type="transit peptide" description="Mitochondrion">
    <location>
        <begin position="1"/>
        <end position="63"/>
    </location>
</feature>
<feature type="chain" id="PRO_0000002574" description="ATP synthase subunit 9, mitochondrial">
    <location>
        <begin position="64"/>
        <end position="144"/>
    </location>
</feature>
<feature type="transmembrane region" description="Helical" evidence="2">
    <location>
        <begin position="83"/>
        <end position="103"/>
    </location>
</feature>
<feature type="transmembrane region" description="Helical" evidence="2">
    <location>
        <begin position="120"/>
        <end position="140"/>
    </location>
</feature>
<feature type="site" description="Reversibly protonated during proton transport" evidence="1">
    <location>
        <position position="128"/>
    </location>
</feature>
<evidence type="ECO:0000250" key="1"/>
<evidence type="ECO:0000255" key="2"/>
<evidence type="ECO:0000305" key="3"/>
<gene>
    <name type="primary">ATP9</name>
</gene>
<protein>
    <recommendedName>
        <fullName>ATP synthase subunit 9, mitochondrial</fullName>
    </recommendedName>
    <alternativeName>
        <fullName>Lipid-binding protein</fullName>
    </alternativeName>
</protein>
<name>ATP9_PODAS</name>
<reference key="1">
    <citation type="journal article" date="1991" name="Curr. Genet.">
        <title>Sequence of the nuclear ATP synthase subunit 9 gene of Podospora anserina: lack of similarity to the mitochondrial genome.</title>
        <authorList>
            <person name="Ridder R."/>
            <person name="Kuenkele K.P."/>
            <person name="Osiewacz H.D."/>
        </authorList>
    </citation>
    <scope>NUCLEOTIDE SEQUENCE [LARGE SCALE GENOMIC DNA]</scope>
    <source>
        <strain>s</strain>
    </source>
</reference>